<evidence type="ECO:0000250" key="1"/>
<evidence type="ECO:0000255" key="2"/>
<evidence type="ECO:0000305" key="3"/>
<comment type="function">
    <text evidence="1">CRISPR (clustered regularly interspaced short palindromic repeat), is an adaptive immune system that provides protection against mobile genetic elements (viruses, transposable elements and conjugative plasmids). CRISPR clusters contain sequences complementary to antecedent mobile elements and target invading nucleic acids. CRISPR clusters are transcribed and processed into CRISPR RNA (crRNA). Functions as a ssRNA-specific endoribonuclease. Involved in the integration of spacer DNA into the CRISPR cassette (By similarity).</text>
</comment>
<comment type="cofactor">
    <cofactor evidence="1">
        <name>Mg(2+)</name>
        <dbReference type="ChEBI" id="CHEBI:18420"/>
    </cofactor>
</comment>
<comment type="subunit">
    <text evidence="1">Homodimer, forms a heterotetramer with a Cas1 homodimer.</text>
</comment>
<comment type="similarity">
    <text evidence="3">Belongs to the CRISPR-associated endoribonuclease Cas2 protein family.</text>
</comment>
<sequence length="94" mass="11114">MRELYLVIAYDTPDDRRRARLAKLLKGFGERRQYSVFEARLTREQWAHLKGKLEALVNKEEDVLAVYFLPPEAVGRTWRIGHEGLKRLEDPDFV</sequence>
<gene>
    <name type="primary">cas2a</name>
    <name type="ordered locus">TT_P0195</name>
</gene>
<keyword id="KW-0051">Antiviral defense</keyword>
<keyword id="KW-0255">Endonuclease</keyword>
<keyword id="KW-0378">Hydrolase</keyword>
<keyword id="KW-0460">Magnesium</keyword>
<keyword id="KW-0479">Metal-binding</keyword>
<keyword id="KW-0540">Nuclease</keyword>
<keyword id="KW-0614">Plasmid</keyword>
<organism>
    <name type="scientific">Thermus thermophilus (strain ATCC BAA-163 / DSM 7039 / HB27)</name>
    <dbReference type="NCBI Taxonomy" id="262724"/>
    <lineage>
        <taxon>Bacteria</taxon>
        <taxon>Thermotogati</taxon>
        <taxon>Deinococcota</taxon>
        <taxon>Deinococci</taxon>
        <taxon>Thermales</taxon>
        <taxon>Thermaceae</taxon>
        <taxon>Thermus</taxon>
    </lineage>
</organism>
<name>CAS2A_THET2</name>
<dbReference type="EC" id="3.1.-.-"/>
<dbReference type="EMBL" id="AE017222">
    <property type="protein sequence ID" value="AAS82525.1"/>
    <property type="molecule type" value="Genomic_DNA"/>
</dbReference>
<dbReference type="RefSeq" id="WP_011174371.1">
    <property type="nucleotide sequence ID" value="NC_005838.1"/>
</dbReference>
<dbReference type="SMR" id="Q745W0"/>
<dbReference type="GeneID" id="3169570"/>
<dbReference type="KEGG" id="tth:TT_P0195"/>
<dbReference type="eggNOG" id="COG1343">
    <property type="taxonomic scope" value="Bacteria"/>
</dbReference>
<dbReference type="HOGENOM" id="CLU_161124_3_3_0"/>
<dbReference type="OrthoDB" id="9798176at2"/>
<dbReference type="Proteomes" id="UP000000592">
    <property type="component" value="Plasmid pTT27"/>
</dbReference>
<dbReference type="GO" id="GO:0046872">
    <property type="term" value="F:metal ion binding"/>
    <property type="evidence" value="ECO:0007669"/>
    <property type="project" value="UniProtKB-UniRule"/>
</dbReference>
<dbReference type="GO" id="GO:0004521">
    <property type="term" value="F:RNA endonuclease activity"/>
    <property type="evidence" value="ECO:0007669"/>
    <property type="project" value="InterPro"/>
</dbReference>
<dbReference type="GO" id="GO:0051607">
    <property type="term" value="P:defense response to virus"/>
    <property type="evidence" value="ECO:0007669"/>
    <property type="project" value="UniProtKB-UniRule"/>
</dbReference>
<dbReference type="GO" id="GO:0043571">
    <property type="term" value="P:maintenance of CRISPR repeat elements"/>
    <property type="evidence" value="ECO:0007669"/>
    <property type="project" value="UniProtKB-UniRule"/>
</dbReference>
<dbReference type="CDD" id="cd09725">
    <property type="entry name" value="Cas2_I_II_III"/>
    <property type="match status" value="1"/>
</dbReference>
<dbReference type="Gene3D" id="3.30.70.240">
    <property type="match status" value="1"/>
</dbReference>
<dbReference type="HAMAP" id="MF_01471">
    <property type="entry name" value="Cas2"/>
    <property type="match status" value="1"/>
</dbReference>
<dbReference type="InterPro" id="IPR021127">
    <property type="entry name" value="CRISPR_associated_Cas2"/>
</dbReference>
<dbReference type="InterPro" id="IPR019199">
    <property type="entry name" value="Virulence_VapD/CRISPR_Cas2"/>
</dbReference>
<dbReference type="NCBIfam" id="TIGR01573">
    <property type="entry name" value="cas2"/>
    <property type="match status" value="1"/>
</dbReference>
<dbReference type="PANTHER" id="PTHR34405">
    <property type="entry name" value="CRISPR-ASSOCIATED ENDORIBONUCLEASE CAS2"/>
    <property type="match status" value="1"/>
</dbReference>
<dbReference type="PANTHER" id="PTHR34405:SF3">
    <property type="entry name" value="CRISPR-ASSOCIATED ENDORIBONUCLEASE CAS2 3"/>
    <property type="match status" value="1"/>
</dbReference>
<dbReference type="Pfam" id="PF09827">
    <property type="entry name" value="CRISPR_Cas2"/>
    <property type="match status" value="1"/>
</dbReference>
<dbReference type="PIRSF" id="PIRSF032582">
    <property type="entry name" value="Cas2"/>
    <property type="match status" value="1"/>
</dbReference>
<dbReference type="SUPFAM" id="SSF143430">
    <property type="entry name" value="TTP0101/SSO1404-like"/>
    <property type="match status" value="1"/>
</dbReference>
<feature type="chain" id="PRO_0000418430" description="CRISPR-associated endoribonuclease Cas2 1">
    <location>
        <begin position="1"/>
        <end position="94"/>
    </location>
</feature>
<feature type="binding site" evidence="2">
    <location>
        <position position="11"/>
    </location>
    <ligand>
        <name>Mg(2+)</name>
        <dbReference type="ChEBI" id="CHEBI:18420"/>
        <note>catalytic</note>
    </ligand>
</feature>
<geneLocation type="plasmid">
    <name>pTT27</name>
</geneLocation>
<reference key="1">
    <citation type="journal article" date="2004" name="Nat. Biotechnol.">
        <title>The genome sequence of the extreme thermophile Thermus thermophilus.</title>
        <authorList>
            <person name="Henne A."/>
            <person name="Brueggemann H."/>
            <person name="Raasch C."/>
            <person name="Wiezer A."/>
            <person name="Hartsch T."/>
            <person name="Liesegang H."/>
            <person name="Johann A."/>
            <person name="Lienard T."/>
            <person name="Gohl O."/>
            <person name="Martinez-Arias R."/>
            <person name="Jacobi C."/>
            <person name="Starkuviene V."/>
            <person name="Schlenczeck S."/>
            <person name="Dencker S."/>
            <person name="Huber R."/>
            <person name="Klenk H.-P."/>
            <person name="Kramer W."/>
            <person name="Merkl R."/>
            <person name="Gottschalk G."/>
            <person name="Fritz H.-J."/>
        </authorList>
    </citation>
    <scope>NUCLEOTIDE SEQUENCE [LARGE SCALE GENOMIC DNA]</scope>
    <source>
        <strain>ATCC BAA-163 / DSM 7039 / HB27</strain>
    </source>
</reference>
<proteinExistence type="inferred from homology"/>
<accession>Q745W0</accession>
<protein>
    <recommendedName>
        <fullName>CRISPR-associated endoribonuclease Cas2 1</fullName>
        <ecNumber>3.1.-.-</ecNumber>
    </recommendedName>
</protein>